<keyword id="KW-0217">Developmental protein</keyword>
<keyword id="KW-0287">Flowering</keyword>
<keyword id="KW-0507">mRNA processing</keyword>
<keyword id="KW-0539">Nucleus</keyword>
<keyword id="KW-1185">Reference proteome</keyword>
<keyword id="KW-0804">Transcription</keyword>
<keyword id="KW-0805">Transcription regulation</keyword>
<name>HUAL2_ARATH</name>
<evidence type="ECO:0000255" key="1">
    <source>
        <dbReference type="PROSITE-ProRule" id="PRU00162"/>
    </source>
</evidence>
<evidence type="ECO:0000255" key="2">
    <source>
        <dbReference type="PROSITE-ProRule" id="PRU00724"/>
    </source>
</evidence>
<evidence type="ECO:0000256" key="3">
    <source>
        <dbReference type="SAM" id="MobiDB-lite"/>
    </source>
</evidence>
<evidence type="ECO:0000269" key="4">
    <source>
    </source>
</evidence>
<evidence type="ECO:0000303" key="5">
    <source>
    </source>
</evidence>
<evidence type="ECO:0000305" key="6"/>
<evidence type="ECO:0000312" key="7">
    <source>
        <dbReference type="Araport" id="AT2G48160"/>
    </source>
</evidence>
<gene>
    <name evidence="5" type="primary">HULK2</name>
    <name evidence="7" type="ordered locus">At2g48160</name>
    <name type="ORF">F11L15.6</name>
</gene>
<sequence length="1366" mass="149639">MAPSRRKGGGKAAAVAAACRKRKVGDLVLAKVKGFPAWPAVVSEPEKWDASPDSKKVFVHFFGTQQIAFCNPGDVEAFTEERKQSLLTRRHAKGSDFVRAVKEIIESYEKLKQQERASDPKSAEEGTLGSAENTTLMPQVIEIPTATSLTQMNSDPSHGRDESTLLNEDASAAEQMLALRDNSGPRNKACDSAVVKEPRKIATYSSRKRNGGVRSQNCAPQNETCPVQRSKSPSRLQTEKLQSSMLQNSDGGQTIDDVEDGALRREKRIRRSSGHSESDDVATSSLNSHGSDEENASEIATVESDNNRNEGNGVDSGSKVEQIDIGGKFLEGDYDLNKGLNFQINIMVKRKKRKPTRKRGTSDVVDPQAKVEGEAVPEAGARNNVQTSQNSHEKFTERPCEENGDEHLPLVKRARVRMSRAFYGNHEANSSLQAEERSPKDTVVSATAQTSPSDIISSHDTFAVEESKFFEVSAKLSGDMVNVAPSPVEKSHDGMSPSEACVQTVREREYAMGWNELSKTPDDKSAGPQYNQVSSLPAGEAQTASVPEAVCPEVLKLLTSESDLPAVQYCQVAKIEPSMDPNTVDSSANNASEICSLSIPSQLSGQDRSNDQDACVSLENSREYLNEEGSKIDACVAQVVQSEAIEHSPSSCLVVNKQETENMPKTVNMLLKEGHGSLGEECAIVEPAQCTPNLPISATESDVIVGENVPLNEIGCTKCEDAVEDSRQLKMIGETNDQKQQVQTNNSVLVSENLSREKMSFSPAITADTPARGTPHSSSVYYHISTSESANDMQNNSSGSPNIPTGEKKNDCDAIVKEEEKIETGVCQGQKVVSCDVQSTRESYEDALCSLVRTKESIGRATCLAMDLMKFGVSAKAMEILAHTLESESNLKRRVDLFFLVDSIAQCSKGLKGDTGCVYLSAIQVILPRLLAAAVPAGATTQENRKQCLKVLKLWLERRILPESIVRHHIRELDSHSIVPACLYSRRSARTERSLDDPVRDMEDMLVDEYGSNSTLQLPGFCMPALLKDEEGGSDSEGGCDSEGGSDSDGGDFESVTPEHESRILEENVSSSTAERHTLILEDVDGELEMEDVAPPWGTENCTHTDQADNTKVSNCQLGQQHRPVFGTSHQHMSLSSPPLPSSSPPPPPAPPSQQGECAMPDSYLNGFENGGYRNVHGDQQAGPLRMNPPLSGSTMHYQGPESSYISGVQLTNSIPQADGSNFQHRPYPSHPHPHPPPPPPPPQHQFSFREPGHVLKSHRDAPSYSHRSHYVPNCDERNFHDNHERMRHAPFENRDNWRYPPSSSYGSRYQDEHKAPYPSSSYNGVRWDNPPRQYNNRPSFHPKPHSEGPAPVGMRDPGMWHQRSD</sequence>
<proteinExistence type="evidence at transcript level"/>
<feature type="chain" id="PRO_0000418859" description="Protein HUA2-LIKE 2">
    <location>
        <begin position="1"/>
        <end position="1366"/>
    </location>
</feature>
<feature type="domain" description="PWWP" evidence="1">
    <location>
        <begin position="24"/>
        <end position="81"/>
    </location>
</feature>
<feature type="domain" description="CID" evidence="2">
    <location>
        <begin position="836"/>
        <end position="977"/>
    </location>
</feature>
<feature type="region of interest" description="Disordered" evidence="3">
    <location>
        <begin position="111"/>
        <end position="138"/>
    </location>
</feature>
<feature type="region of interest" description="Disordered" evidence="3">
    <location>
        <begin position="203"/>
        <end position="319"/>
    </location>
</feature>
<feature type="region of interest" description="Disordered" evidence="3">
    <location>
        <begin position="384"/>
        <end position="403"/>
    </location>
</feature>
<feature type="region of interest" description="Disordered" evidence="3">
    <location>
        <begin position="427"/>
        <end position="451"/>
    </location>
</feature>
<feature type="region of interest" description="Disordered" evidence="3">
    <location>
        <begin position="787"/>
        <end position="808"/>
    </location>
</feature>
<feature type="region of interest" description="Disordered" evidence="3">
    <location>
        <begin position="1027"/>
        <end position="1076"/>
    </location>
</feature>
<feature type="region of interest" description="Disordered" evidence="3">
    <location>
        <begin position="1128"/>
        <end position="1366"/>
    </location>
</feature>
<feature type="compositionally biased region" description="Basic and acidic residues" evidence="3">
    <location>
        <begin position="111"/>
        <end position="124"/>
    </location>
</feature>
<feature type="compositionally biased region" description="Polar residues" evidence="3">
    <location>
        <begin position="213"/>
        <end position="252"/>
    </location>
</feature>
<feature type="compositionally biased region" description="Basic and acidic residues" evidence="3">
    <location>
        <begin position="391"/>
        <end position="403"/>
    </location>
</feature>
<feature type="compositionally biased region" description="Polar residues" evidence="3">
    <location>
        <begin position="787"/>
        <end position="803"/>
    </location>
</feature>
<feature type="compositionally biased region" description="Acidic residues" evidence="3">
    <location>
        <begin position="1032"/>
        <end position="1052"/>
    </location>
</feature>
<feature type="compositionally biased region" description="Basic and acidic residues" evidence="3">
    <location>
        <begin position="1057"/>
        <end position="1066"/>
    </location>
</feature>
<feature type="compositionally biased region" description="Pro residues" evidence="3">
    <location>
        <begin position="1138"/>
        <end position="1152"/>
    </location>
</feature>
<feature type="compositionally biased region" description="Polar residues" evidence="3">
    <location>
        <begin position="1191"/>
        <end position="1223"/>
    </location>
</feature>
<feature type="compositionally biased region" description="Pro residues" evidence="3">
    <location>
        <begin position="1229"/>
        <end position="1244"/>
    </location>
</feature>
<feature type="compositionally biased region" description="Basic and acidic residues" evidence="3">
    <location>
        <begin position="1251"/>
        <end position="1262"/>
    </location>
</feature>
<feature type="compositionally biased region" description="Basic and acidic residues" evidence="3">
    <location>
        <begin position="1275"/>
        <end position="1298"/>
    </location>
</feature>
<feature type="compositionally biased region" description="Low complexity" evidence="3">
    <location>
        <begin position="1299"/>
        <end position="1309"/>
    </location>
</feature>
<feature type="sequence conflict" description="In Ref. 2; AEC10947." evidence="6" ref="2">
    <original>K</original>
    <variation>R</variation>
    <location>
        <position position="11"/>
    </location>
</feature>
<reference key="1">
    <citation type="journal article" date="1999" name="Nature">
        <title>Sequence and analysis of chromosome 2 of the plant Arabidopsis thaliana.</title>
        <authorList>
            <person name="Lin X."/>
            <person name="Kaul S."/>
            <person name="Rounsley S.D."/>
            <person name="Shea T.P."/>
            <person name="Benito M.-I."/>
            <person name="Town C.D."/>
            <person name="Fujii C.Y."/>
            <person name="Mason T.M."/>
            <person name="Bowman C.L."/>
            <person name="Barnstead M.E."/>
            <person name="Feldblyum T.V."/>
            <person name="Buell C.R."/>
            <person name="Ketchum K.A."/>
            <person name="Lee J.J."/>
            <person name="Ronning C.M."/>
            <person name="Koo H.L."/>
            <person name="Moffat K.S."/>
            <person name="Cronin L.A."/>
            <person name="Shen M."/>
            <person name="Pai G."/>
            <person name="Van Aken S."/>
            <person name="Umayam L."/>
            <person name="Tallon L.J."/>
            <person name="Gill J.E."/>
            <person name="Adams M.D."/>
            <person name="Carrera A.J."/>
            <person name="Creasy T.H."/>
            <person name="Goodman H.M."/>
            <person name="Somerville C.R."/>
            <person name="Copenhaver G.P."/>
            <person name="Preuss D."/>
            <person name="Nierman W.C."/>
            <person name="White O."/>
            <person name="Eisen J.A."/>
            <person name="Salzberg S.L."/>
            <person name="Fraser C.M."/>
            <person name="Venter J.C."/>
        </authorList>
    </citation>
    <scope>NUCLEOTIDE SEQUENCE [LARGE SCALE GENOMIC DNA]</scope>
    <source>
        <strain>cv. Columbia</strain>
    </source>
</reference>
<reference key="2">
    <citation type="journal article" date="2017" name="Plant J.">
        <title>Araport11: a complete reannotation of the Arabidopsis thaliana reference genome.</title>
        <authorList>
            <person name="Cheng C.Y."/>
            <person name="Krishnakumar V."/>
            <person name="Chan A.P."/>
            <person name="Thibaud-Nissen F."/>
            <person name="Schobel S."/>
            <person name="Town C.D."/>
        </authorList>
    </citation>
    <scope>GENOME REANNOTATION</scope>
    <scope>SEQUENCE REVISION</scope>
    <source>
        <strain>cv. Columbia</strain>
    </source>
</reference>
<reference key="3">
    <citation type="journal article" date="2002" name="Science">
        <title>Functional annotation of a full-length Arabidopsis cDNA collection.</title>
        <authorList>
            <person name="Seki M."/>
            <person name="Narusaka M."/>
            <person name="Kamiya A."/>
            <person name="Ishida J."/>
            <person name="Satou M."/>
            <person name="Sakurai T."/>
            <person name="Nakajima M."/>
            <person name="Enju A."/>
            <person name="Akiyama K."/>
            <person name="Oono Y."/>
            <person name="Muramatsu M."/>
            <person name="Hayashizaki Y."/>
            <person name="Kawai J."/>
            <person name="Carninci P."/>
            <person name="Itoh M."/>
            <person name="Ishii Y."/>
            <person name="Arakawa T."/>
            <person name="Shibata K."/>
            <person name="Shinagawa A."/>
            <person name="Shinozaki K."/>
        </authorList>
    </citation>
    <scope>NUCLEOTIDE SEQUENCE [LARGE SCALE MRNA]</scope>
    <source>
        <strain>cv. Columbia</strain>
    </source>
</reference>
<reference key="4">
    <citation type="journal article" date="2014" name="Plant J.">
        <title>A plant-specific HUA2-LIKE (HULK) gene family in Arabidopsis thaliana is essential for development.</title>
        <authorList>
            <person name="Jali S.S."/>
            <person name="Rosloski S.M."/>
            <person name="Janakirama P."/>
            <person name="Steffen J.G."/>
            <person name="Zhurov V."/>
            <person name="Berleth T."/>
            <person name="Clark R.M."/>
            <person name="Grbic V."/>
        </authorList>
    </citation>
    <scope>FUNCTION</scope>
    <scope>SUBCELLULAR LOCATION</scope>
    <scope>TISSUE SPECIFICITY</scope>
    <scope>DISRUPTION PHENOTYPE</scope>
</reference>
<protein>
    <recommendedName>
        <fullName evidence="5">Protein HUA2-LIKE 2</fullName>
    </recommendedName>
    <alternativeName>
        <fullName evidence="6">HUA2-like protein 2</fullName>
    </alternativeName>
</protein>
<accession>F4IN78</accession>
<accession>Q8GYT7</accession>
<comment type="function">
    <text evidence="4">Probable transcription factor that acts with partial redundancy with HULK1 and HULK3. Plays diverse and essential roles in the control of plant development, physiology and flowering time.</text>
</comment>
<comment type="subcellular location">
    <subcellularLocation>
        <location evidence="4">Nucleus</location>
    </subcellularLocation>
</comment>
<comment type="tissue specificity">
    <text evidence="4">Expressed throughout young primordia, and vegetative and reproductive apices.</text>
</comment>
<comment type="disruption phenotype">
    <text evidence="4">No visible phenotype under normal growth conditions, but the triple mutant plants hulk1, hulk2 and hulk3 show delayed flowering.</text>
</comment>
<dbReference type="EMBL" id="AC006072">
    <property type="status" value="NOT_ANNOTATED_CDS"/>
    <property type="molecule type" value="Genomic_DNA"/>
</dbReference>
<dbReference type="EMBL" id="CP002685">
    <property type="protein sequence ID" value="AEC10947.1"/>
    <property type="molecule type" value="Genomic_DNA"/>
</dbReference>
<dbReference type="EMBL" id="AK117393">
    <property type="protein sequence ID" value="BAC42062.1"/>
    <property type="molecule type" value="mRNA"/>
</dbReference>
<dbReference type="PIR" id="B84924">
    <property type="entry name" value="B84924"/>
</dbReference>
<dbReference type="RefSeq" id="NP_850485.2">
    <property type="nucleotide sequence ID" value="NM_180154.7"/>
</dbReference>
<dbReference type="SMR" id="F4IN78"/>
<dbReference type="STRING" id="3702.F4IN78"/>
<dbReference type="PaxDb" id="3702-AT2G48160.1"/>
<dbReference type="ProteomicsDB" id="230158"/>
<dbReference type="GeneID" id="819428"/>
<dbReference type="KEGG" id="ath:AT2G48160"/>
<dbReference type="Araport" id="AT2G48160"/>
<dbReference type="TAIR" id="AT2G48160">
    <property type="gene designation" value="HULK2"/>
</dbReference>
<dbReference type="eggNOG" id="KOG1904">
    <property type="taxonomic scope" value="Eukaryota"/>
</dbReference>
<dbReference type="HOGENOM" id="CLU_004888_0_0_1"/>
<dbReference type="InParanoid" id="F4IN78"/>
<dbReference type="PhylomeDB" id="F4IN78"/>
<dbReference type="PRO" id="PR:F4IN78"/>
<dbReference type="Proteomes" id="UP000006548">
    <property type="component" value="Chromosome 2"/>
</dbReference>
<dbReference type="ExpressionAtlas" id="F4IN78">
    <property type="expression patterns" value="baseline and differential"/>
</dbReference>
<dbReference type="GO" id="GO:0005634">
    <property type="term" value="C:nucleus"/>
    <property type="evidence" value="ECO:0000314"/>
    <property type="project" value="TAIR"/>
</dbReference>
<dbReference type="GO" id="GO:0006338">
    <property type="term" value="P:chromatin remodeling"/>
    <property type="evidence" value="ECO:0000318"/>
    <property type="project" value="GO_Central"/>
</dbReference>
<dbReference type="GO" id="GO:0009908">
    <property type="term" value="P:flower development"/>
    <property type="evidence" value="ECO:0007669"/>
    <property type="project" value="UniProtKB-KW"/>
</dbReference>
<dbReference type="GO" id="GO:0006397">
    <property type="term" value="P:mRNA processing"/>
    <property type="evidence" value="ECO:0007669"/>
    <property type="project" value="UniProtKB-KW"/>
</dbReference>
<dbReference type="CDD" id="cd20147">
    <property type="entry name" value="PWWP_HULK"/>
    <property type="match status" value="1"/>
</dbReference>
<dbReference type="FunFam" id="1.25.40.90:FF:000037">
    <property type="entry name" value="Enhancer of ag-4 2"/>
    <property type="match status" value="1"/>
</dbReference>
<dbReference type="Gene3D" id="1.25.40.90">
    <property type="match status" value="1"/>
</dbReference>
<dbReference type="Gene3D" id="2.30.30.140">
    <property type="match status" value="1"/>
</dbReference>
<dbReference type="InterPro" id="IPR006569">
    <property type="entry name" value="CID_dom"/>
</dbReference>
<dbReference type="InterPro" id="IPR008942">
    <property type="entry name" value="ENTH_VHS"/>
</dbReference>
<dbReference type="InterPro" id="IPR000313">
    <property type="entry name" value="PWWP_dom"/>
</dbReference>
<dbReference type="PANTHER" id="PTHR12550">
    <property type="entry name" value="HEPATOMA-DERIVED GROWTH FACTOR-RELATED"/>
    <property type="match status" value="1"/>
</dbReference>
<dbReference type="PANTHER" id="PTHR12550:SF49">
    <property type="entry name" value="PROTEIN HUA2-LIKE 2-RELATED"/>
    <property type="match status" value="1"/>
</dbReference>
<dbReference type="Pfam" id="PF04818">
    <property type="entry name" value="CID"/>
    <property type="match status" value="1"/>
</dbReference>
<dbReference type="Pfam" id="PF00855">
    <property type="entry name" value="PWWP"/>
    <property type="match status" value="1"/>
</dbReference>
<dbReference type="SMART" id="SM00293">
    <property type="entry name" value="PWWP"/>
    <property type="match status" value="1"/>
</dbReference>
<dbReference type="SMART" id="SM00582">
    <property type="entry name" value="RPR"/>
    <property type="match status" value="1"/>
</dbReference>
<dbReference type="SUPFAM" id="SSF63748">
    <property type="entry name" value="Tudor/PWWP/MBT"/>
    <property type="match status" value="1"/>
</dbReference>
<dbReference type="PROSITE" id="PS51391">
    <property type="entry name" value="CID"/>
    <property type="match status" value="1"/>
</dbReference>
<dbReference type="PROSITE" id="PS50812">
    <property type="entry name" value="PWWP"/>
    <property type="match status" value="1"/>
</dbReference>
<organism>
    <name type="scientific">Arabidopsis thaliana</name>
    <name type="common">Mouse-ear cress</name>
    <dbReference type="NCBI Taxonomy" id="3702"/>
    <lineage>
        <taxon>Eukaryota</taxon>
        <taxon>Viridiplantae</taxon>
        <taxon>Streptophyta</taxon>
        <taxon>Embryophyta</taxon>
        <taxon>Tracheophyta</taxon>
        <taxon>Spermatophyta</taxon>
        <taxon>Magnoliopsida</taxon>
        <taxon>eudicotyledons</taxon>
        <taxon>Gunneridae</taxon>
        <taxon>Pentapetalae</taxon>
        <taxon>rosids</taxon>
        <taxon>malvids</taxon>
        <taxon>Brassicales</taxon>
        <taxon>Brassicaceae</taxon>
        <taxon>Camelineae</taxon>
        <taxon>Arabidopsis</taxon>
    </lineage>
</organism>